<gene>
    <name evidence="1" type="primary">rplR</name>
</gene>
<feature type="chain" id="PRO_0000131232" description="Large ribosomal subunit protein uL18">
    <location>
        <begin position="1"/>
        <end position="117"/>
    </location>
</feature>
<comment type="function">
    <text evidence="1">This is one of the proteins that bind and probably mediate the attachment of the 5S RNA into the large ribosomal subunit, where it forms part of the central protuberance.</text>
</comment>
<comment type="subunit">
    <text evidence="1">Part of the 50S ribosomal subunit; part of the 5S rRNA/L5/L18/L25 subcomplex. Contacts the 5S and 23S rRNAs.</text>
</comment>
<comment type="similarity">
    <text evidence="1">Belongs to the universal ribosomal protein uL18 family.</text>
</comment>
<protein>
    <recommendedName>
        <fullName evidence="1">Large ribosomal subunit protein uL18</fullName>
    </recommendedName>
    <alternativeName>
        <fullName evidence="2">50S ribosomal protein L18</fullName>
    </alternativeName>
</protein>
<name>RL18_BUCAK</name>
<dbReference type="EMBL" id="D31786">
    <property type="protein sequence ID" value="BAA06591.1"/>
    <property type="molecule type" value="Genomic_DNA"/>
</dbReference>
<dbReference type="SMR" id="P46182"/>
<dbReference type="GO" id="GO:0022625">
    <property type="term" value="C:cytosolic large ribosomal subunit"/>
    <property type="evidence" value="ECO:0007669"/>
    <property type="project" value="TreeGrafter"/>
</dbReference>
<dbReference type="GO" id="GO:0008097">
    <property type="term" value="F:5S rRNA binding"/>
    <property type="evidence" value="ECO:0007669"/>
    <property type="project" value="TreeGrafter"/>
</dbReference>
<dbReference type="GO" id="GO:0003735">
    <property type="term" value="F:structural constituent of ribosome"/>
    <property type="evidence" value="ECO:0007669"/>
    <property type="project" value="InterPro"/>
</dbReference>
<dbReference type="GO" id="GO:0006412">
    <property type="term" value="P:translation"/>
    <property type="evidence" value="ECO:0007669"/>
    <property type="project" value="UniProtKB-UniRule"/>
</dbReference>
<dbReference type="CDD" id="cd00432">
    <property type="entry name" value="Ribosomal_L18_L5e"/>
    <property type="match status" value="1"/>
</dbReference>
<dbReference type="FunFam" id="3.30.420.100:FF:000001">
    <property type="entry name" value="50S ribosomal protein L18"/>
    <property type="match status" value="1"/>
</dbReference>
<dbReference type="Gene3D" id="3.30.420.100">
    <property type="match status" value="1"/>
</dbReference>
<dbReference type="HAMAP" id="MF_01337_B">
    <property type="entry name" value="Ribosomal_uL18_B"/>
    <property type="match status" value="1"/>
</dbReference>
<dbReference type="InterPro" id="IPR004389">
    <property type="entry name" value="Ribosomal_uL18_bac-type"/>
</dbReference>
<dbReference type="InterPro" id="IPR005484">
    <property type="entry name" value="Ribosomal_uL18_bac/euk"/>
</dbReference>
<dbReference type="NCBIfam" id="TIGR00060">
    <property type="entry name" value="L18_bact"/>
    <property type="match status" value="1"/>
</dbReference>
<dbReference type="PANTHER" id="PTHR12899">
    <property type="entry name" value="39S RIBOSOMAL PROTEIN L18, MITOCHONDRIAL"/>
    <property type="match status" value="1"/>
</dbReference>
<dbReference type="PANTHER" id="PTHR12899:SF3">
    <property type="entry name" value="LARGE RIBOSOMAL SUBUNIT PROTEIN UL18M"/>
    <property type="match status" value="1"/>
</dbReference>
<dbReference type="Pfam" id="PF00861">
    <property type="entry name" value="Ribosomal_L18p"/>
    <property type="match status" value="1"/>
</dbReference>
<dbReference type="SUPFAM" id="SSF53137">
    <property type="entry name" value="Translational machinery components"/>
    <property type="match status" value="1"/>
</dbReference>
<proteinExistence type="inferred from homology"/>
<accession>P46182</accession>
<keyword id="KW-0687">Ribonucleoprotein</keyword>
<keyword id="KW-0689">Ribosomal protein</keyword>
<keyword id="KW-0694">RNA-binding</keyword>
<keyword id="KW-0699">rRNA-binding</keyword>
<evidence type="ECO:0000255" key="1">
    <source>
        <dbReference type="HAMAP-Rule" id="MF_01337"/>
    </source>
</evidence>
<evidence type="ECO:0000305" key="2"/>
<reference key="1">
    <citation type="journal article" date="1994" name="DNA Res.">
        <title>Cloning and characterization of the ribosomal protein genes in the spc operon of a prokaryotic endosymbiont of the pea aphid, Acyrthosiphon kondoi.</title>
        <authorList>
            <person name="Abe R."/>
            <person name="Yamashita A."/>
            <person name="Isono K."/>
        </authorList>
    </citation>
    <scope>NUCLEOTIDE SEQUENCE [GENOMIC DNA]</scope>
    <source>
        <strain>Kurashiki</strain>
    </source>
</reference>
<organism>
    <name type="scientific">Buchnera aphidicola subsp. Acyrthosiphon kondoi</name>
    <name type="common">Acyrthosiphon kondoi symbiotic bacterium</name>
    <dbReference type="NCBI Taxonomy" id="42474"/>
    <lineage>
        <taxon>Bacteria</taxon>
        <taxon>Pseudomonadati</taxon>
        <taxon>Pseudomonadota</taxon>
        <taxon>Gammaproteobacteria</taxon>
        <taxon>Enterobacterales</taxon>
        <taxon>Erwiniaceae</taxon>
        <taxon>Buchnera</taxon>
    </lineage>
</organism>
<sequence length="117" mass="12730">MDKKSARIRRATRARRKLKELGATRLVVHRSPRHMYAQVIAPNGSEVLVAASTLEKAITEQLKYSGNKDAAAAVGKALAERALEKGIAKVSFARSGFQYHGRVQALADAAREAGLQF</sequence>